<name>PB3_PROTR</name>
<comment type="function">
    <text evidence="3">Possible mediator for cell division in the blooming process.</text>
</comment>
<comment type="developmental stage">
    <text evidence="1 2 3">Appears in the preblooming stage (G0/G1) of the algal life cycle and remains in the blooming stage (S and G2/M).</text>
</comment>
<comment type="miscellaneous">
    <text evidence="3">On the 2D-gel the determined pI of this protein is: 5.6, its MW is: 21.5 kDa.</text>
</comment>
<feature type="chain" id="PRO_0000058241" description="Preblooming protein 3">
    <location>
        <begin position="1"/>
        <end position="15" status="greater than"/>
    </location>
</feature>
<feature type="non-terminal residue" evidence="3">
    <location>
        <position position="15"/>
    </location>
</feature>
<sequence length="15" mass="1736">AEYDVSDADIEAFYQ</sequence>
<evidence type="ECO:0000269" key="1">
    <source>
    </source>
</evidence>
<evidence type="ECO:0000269" key="2">
    <source ref="1"/>
</evidence>
<evidence type="ECO:0000305" key="3"/>
<reference evidence="3" key="1">
    <citation type="thesis" date="2004" institute="The Hong Kong Polytechnic University" country="Hong Kong">
        <title>Proteomic approach to characterize differential protein expression in toxic and harmful algal bloom species (HABs).</title>
        <authorList>
            <person name="Chan L.L."/>
        </authorList>
    </citation>
    <scope>PROTEIN SEQUENCE</scope>
    <scope>DEVELOPMENTAL STAGE</scope>
    <source>
        <strain evidence="3">Hong Kong</strain>
    </source>
</reference>
<reference key="2">
    <citation type="journal article" date="2004" name="Proteomics">
        <title>Proteomic study of a model causative agent of harmful algal blooms, Prorocentrum triestinum II: the use of differentially expressed protein profiles under different growth phases and growth conditions for bloom prediction.</title>
        <authorList>
            <person name="Chan L.L."/>
            <person name="Hodgkiss I.J."/>
            <person name="Wan J.M.-F."/>
            <person name="Lum J.H.-K."/>
            <person name="Mak A.S.-C."/>
            <person name="Sit W.-H."/>
            <person name="Lo S.C.-L."/>
        </authorList>
    </citation>
    <scope>PROTEIN SEQUENCE</scope>
    <scope>DEVELOPMENTAL STAGE</scope>
    <source>
        <strain>Hong Kong</strain>
    </source>
</reference>
<proteinExistence type="evidence at protein level"/>
<accession>P83766</accession>
<keyword id="KW-0131">Cell cycle</keyword>
<keyword id="KW-0132">Cell division</keyword>
<keyword id="KW-0903">Direct protein sequencing</keyword>
<organism evidence="3">
    <name type="scientific">Prorocentrum triestinum</name>
    <name type="common">Red tide alga</name>
    <dbReference type="NCBI Taxonomy" id="39450"/>
    <lineage>
        <taxon>Eukaryota</taxon>
        <taxon>Sar</taxon>
        <taxon>Alveolata</taxon>
        <taxon>Dinophyceae</taxon>
        <taxon>Prorocentrales</taxon>
        <taxon>Prorocentraceae</taxon>
        <taxon>Prorocentrum</taxon>
    </lineage>
</organism>
<dbReference type="GO" id="GO:0051301">
    <property type="term" value="P:cell division"/>
    <property type="evidence" value="ECO:0007669"/>
    <property type="project" value="UniProtKB-KW"/>
</dbReference>
<protein>
    <recommendedName>
        <fullName>Preblooming protein 3</fullName>
        <shortName>PB3</shortName>
    </recommendedName>
</protein>